<proteinExistence type="inferred from homology"/>
<comment type="function">
    <text evidence="1">Involved in regulation of DNA replication.</text>
</comment>
<comment type="similarity">
    <text evidence="1">Belongs to the CDC6/cdc18 family.</text>
</comment>
<evidence type="ECO:0000255" key="1">
    <source>
        <dbReference type="HAMAP-Rule" id="MF_01407"/>
    </source>
</evidence>
<geneLocation type="plasmid">
    <name>pFZ1</name>
</geneLocation>
<feature type="chain" id="PRO_0000151006" description="ORC1-type DNA replication protein">
    <location>
        <begin position="1"/>
        <end position="364"/>
    </location>
</feature>
<feature type="binding site" evidence="1">
    <location>
        <begin position="58"/>
        <end position="62"/>
    </location>
    <ligand>
        <name>ATP</name>
        <dbReference type="ChEBI" id="CHEBI:30616"/>
    </ligand>
</feature>
<feature type="binding site" evidence="1">
    <location>
        <position position="184"/>
    </location>
    <ligand>
        <name>ATP</name>
        <dbReference type="ChEBI" id="CHEBI:30616"/>
    </ligand>
</feature>
<feature type="binding site" evidence="1">
    <location>
        <position position="196"/>
    </location>
    <ligand>
        <name>ATP</name>
        <dbReference type="ChEBI" id="CHEBI:30616"/>
    </ligand>
</feature>
<keyword id="KW-0067">ATP-binding</keyword>
<keyword id="KW-0235">DNA replication</keyword>
<keyword id="KW-0547">Nucleotide-binding</keyword>
<keyword id="KW-0614">Plasmid</keyword>
<dbReference type="EMBL" id="X68367">
    <property type="protein sequence ID" value="CAA48438.1"/>
    <property type="molecule type" value="Genomic_DNA"/>
</dbReference>
<dbReference type="PIR" id="S30324">
    <property type="entry name" value="S26458"/>
</dbReference>
<dbReference type="RefSeq" id="NP_039767.1">
    <property type="nucleotide sequence ID" value="NC_001337.1"/>
</dbReference>
<dbReference type="RefSeq" id="WP_010889853.1">
    <property type="nucleotide sequence ID" value="NC_001337.1"/>
</dbReference>
<dbReference type="SMR" id="P29570"/>
<dbReference type="GeneID" id="24855020"/>
<dbReference type="PRO" id="PR:P29570"/>
<dbReference type="GO" id="GO:0005524">
    <property type="term" value="F:ATP binding"/>
    <property type="evidence" value="ECO:0007669"/>
    <property type="project" value="UniProtKB-UniRule"/>
</dbReference>
<dbReference type="GO" id="GO:0016887">
    <property type="term" value="F:ATP hydrolysis activity"/>
    <property type="evidence" value="ECO:0007669"/>
    <property type="project" value="InterPro"/>
</dbReference>
<dbReference type="GO" id="GO:0006260">
    <property type="term" value="P:DNA replication"/>
    <property type="evidence" value="ECO:0007669"/>
    <property type="project" value="UniProtKB-UniRule"/>
</dbReference>
<dbReference type="CDD" id="cd00009">
    <property type="entry name" value="AAA"/>
    <property type="match status" value="1"/>
</dbReference>
<dbReference type="FunFam" id="1.10.8.60:FF:000073">
    <property type="entry name" value="ORC1-type DNA replication protein"/>
    <property type="match status" value="1"/>
</dbReference>
<dbReference type="Gene3D" id="1.10.8.60">
    <property type="match status" value="1"/>
</dbReference>
<dbReference type="Gene3D" id="3.40.50.300">
    <property type="entry name" value="P-loop containing nucleotide triphosphate hydrolases"/>
    <property type="match status" value="1"/>
</dbReference>
<dbReference type="Gene3D" id="1.10.10.10">
    <property type="entry name" value="Winged helix-like DNA-binding domain superfamily/Winged helix DNA-binding domain"/>
    <property type="match status" value="1"/>
</dbReference>
<dbReference type="HAMAP" id="MF_01407">
    <property type="entry name" value="ORC1_type_DNA_replic_protein"/>
    <property type="match status" value="1"/>
</dbReference>
<dbReference type="InterPro" id="IPR003593">
    <property type="entry name" value="AAA+_ATPase"/>
</dbReference>
<dbReference type="InterPro" id="IPR049945">
    <property type="entry name" value="AAA_22"/>
</dbReference>
<dbReference type="InterPro" id="IPR015163">
    <property type="entry name" value="Cdc6_C"/>
</dbReference>
<dbReference type="InterPro" id="IPR055237">
    <property type="entry name" value="Cdc6_lid"/>
</dbReference>
<dbReference type="InterPro" id="IPR050311">
    <property type="entry name" value="ORC1/CDC6"/>
</dbReference>
<dbReference type="InterPro" id="IPR014277">
    <property type="entry name" value="Orc1/Cdc6_arc"/>
</dbReference>
<dbReference type="InterPro" id="IPR027417">
    <property type="entry name" value="P-loop_NTPase"/>
</dbReference>
<dbReference type="InterPro" id="IPR036388">
    <property type="entry name" value="WH-like_DNA-bd_sf"/>
</dbReference>
<dbReference type="InterPro" id="IPR036390">
    <property type="entry name" value="WH_DNA-bd_sf"/>
</dbReference>
<dbReference type="NCBIfam" id="TIGR02928">
    <property type="entry name" value="orc1/cdc6 family replication initiation protein"/>
    <property type="match status" value="1"/>
</dbReference>
<dbReference type="PANTHER" id="PTHR10763">
    <property type="entry name" value="CELL DIVISION CONTROL PROTEIN 6-RELATED"/>
    <property type="match status" value="1"/>
</dbReference>
<dbReference type="PANTHER" id="PTHR10763:SF22">
    <property type="entry name" value="ORC1-TYPE DNA REPLICATION PROTEIN"/>
    <property type="match status" value="1"/>
</dbReference>
<dbReference type="Pfam" id="PF13401">
    <property type="entry name" value="AAA_22"/>
    <property type="match status" value="1"/>
</dbReference>
<dbReference type="Pfam" id="PF09079">
    <property type="entry name" value="Cdc6_C"/>
    <property type="match status" value="1"/>
</dbReference>
<dbReference type="Pfam" id="PF22703">
    <property type="entry name" value="Cdc6_lid"/>
    <property type="match status" value="1"/>
</dbReference>
<dbReference type="SMART" id="SM00382">
    <property type="entry name" value="AAA"/>
    <property type="match status" value="1"/>
</dbReference>
<dbReference type="SMART" id="SM01074">
    <property type="entry name" value="Cdc6_C"/>
    <property type="match status" value="1"/>
</dbReference>
<dbReference type="SUPFAM" id="SSF52540">
    <property type="entry name" value="P-loop containing nucleoside triphosphate hydrolases"/>
    <property type="match status" value="1"/>
</dbReference>
<dbReference type="SUPFAM" id="SSF46785">
    <property type="entry name" value="Winged helix' DNA-binding domain"/>
    <property type="match status" value="1"/>
</dbReference>
<sequence>MFEKRPKLFKNRDVLSPLFVPDTLQDRKEEVGAISQYLGYILDGATPPHLLIVGPPGSGKTVTTKYVINELEKHTSDAVIEYIVADGTAYQVATSIARAPRRGLGFLNIVEKIRERASEGKMIIVMDEIDKTLSRDGDKLLYHLSREPNVCIVGLSNKLTVMDMIGDSGVISSFKPRRISFAPYSAPQLEEILNYRVEMAFNDGVLEDDVVPLCAALAAQRNGDARYALDLLSFAADIAIRQLKGVVSESDVRMATDEVEVEFIRRSIEQLRDNQKILLYAVMTSQGGTPTEIYRKYNKMAEEQFGGNALTQRRLSQLLRELELYGLVEIEVVGRGRGRGVNWHVVPSSSIDPDLMLEAIRRSL</sequence>
<organism>
    <name type="scientific">Methanothermobacter thermautotrophicus</name>
    <name type="common">Methanobacterium thermoformicicum</name>
    <dbReference type="NCBI Taxonomy" id="145262"/>
    <lineage>
        <taxon>Archaea</taxon>
        <taxon>Methanobacteriati</taxon>
        <taxon>Methanobacteriota</taxon>
        <taxon>Methanomada group</taxon>
        <taxon>Methanobacteria</taxon>
        <taxon>Methanobacteriales</taxon>
        <taxon>Methanobacteriaceae</taxon>
        <taxon>Methanothermobacter</taxon>
    </lineage>
</organism>
<name>CDC6Z_METTF</name>
<accession>P29570</accession>
<protein>
    <recommendedName>
        <fullName evidence="1">ORC1-type DNA replication protein</fullName>
    </recommendedName>
</protein>
<gene>
    <name type="primary">cdc6</name>
</gene>
<reference key="1">
    <citation type="journal article" date="1992" name="Nucleic Acids Res.">
        <title>Modular organization of related Archaeal plasmids encoding different restriction-modification systems in Methanobacterium thermoformicicum.</title>
        <authorList>
            <person name="Noelling J."/>
            <person name="van Eeden F.J.M."/>
            <person name="Eggen R.I.L."/>
            <person name="de Vos W.M."/>
        </authorList>
    </citation>
    <scope>NUCLEOTIDE SEQUENCE [GENOMIC DNA]</scope>
    <source>
        <strain>DSM 3720 / Z-245</strain>
    </source>
</reference>